<comment type="function">
    <text evidence="2">The CDP-abequose synthase is involved in lipopolysaccharides (LPS) synthesis containing abequose which are important antigens of the cell surface responsible for the serological O specificity. Derivatives of the 3,6-dideoxyhexose group have a particular highly immunogenic character.</text>
</comment>
<comment type="catalytic activity">
    <reaction evidence="3">
        <text>CDP-alpha-D-abequose + NADP(+) = CDP-4-dehydro-3,6-dideoxy-alpha-D-glucose + NADPH + H(+)</text>
        <dbReference type="Rhea" id="RHEA:34563"/>
        <dbReference type="ChEBI" id="CHEBI:15378"/>
        <dbReference type="ChEBI" id="CHEBI:57783"/>
        <dbReference type="ChEBI" id="CHEBI:58349"/>
        <dbReference type="ChEBI" id="CHEBI:70783"/>
        <dbReference type="ChEBI" id="CHEBI:70784"/>
        <dbReference type="EC" id="1.1.1.341"/>
    </reaction>
</comment>
<comment type="pathway">
    <text>Bacterial outer membrane biogenesis; LPS O-antigen biosynthesis.</text>
</comment>
<comment type="similarity">
    <text evidence="4">Belongs to the NAD(P)-dependent epimerase/dehydratase family.</text>
</comment>
<dbReference type="EC" id="1.1.1.341"/>
<dbReference type="EMBL" id="AF461770">
    <property type="protein sequence ID" value="AAB49402.1"/>
    <property type="molecule type" value="Genomic_DNA"/>
</dbReference>
<dbReference type="PIR" id="F47070">
    <property type="entry name" value="F47070"/>
</dbReference>
<dbReference type="RefSeq" id="WP_038400274.1">
    <property type="nucleotide sequence ID" value="NZ_AP031366.1"/>
</dbReference>
<dbReference type="SMR" id="Q05342"/>
<dbReference type="KEGG" id="ag:AAB49402"/>
<dbReference type="KEGG" id="ypq:DJ40_1357"/>
<dbReference type="KEGG" id="ypr:BZ20_1044"/>
<dbReference type="PATRIC" id="fig|633.44.peg.1459"/>
<dbReference type="eggNOG" id="COG0451">
    <property type="taxonomic scope" value="Bacteria"/>
</dbReference>
<dbReference type="BRENDA" id="1.1.1.341">
    <property type="organism ID" value="4560"/>
</dbReference>
<dbReference type="UniPathway" id="UPA00281"/>
<dbReference type="GO" id="GO:0016491">
    <property type="term" value="F:oxidoreductase activity"/>
    <property type="evidence" value="ECO:0007669"/>
    <property type="project" value="UniProtKB-KW"/>
</dbReference>
<dbReference type="GO" id="GO:0009243">
    <property type="term" value="P:O antigen biosynthetic process"/>
    <property type="evidence" value="ECO:0007669"/>
    <property type="project" value="UniProtKB-UniPathway"/>
</dbReference>
<dbReference type="Gene3D" id="3.40.50.720">
    <property type="entry name" value="NAD(P)-binding Rossmann-like Domain"/>
    <property type="match status" value="1"/>
</dbReference>
<dbReference type="InterPro" id="IPR001509">
    <property type="entry name" value="Epimerase_deHydtase"/>
</dbReference>
<dbReference type="InterPro" id="IPR050177">
    <property type="entry name" value="Lipid_A_modif_metabolic_enz"/>
</dbReference>
<dbReference type="InterPro" id="IPR036291">
    <property type="entry name" value="NAD(P)-bd_dom_sf"/>
</dbReference>
<dbReference type="PANTHER" id="PTHR43245">
    <property type="entry name" value="BIFUNCTIONAL POLYMYXIN RESISTANCE PROTEIN ARNA"/>
    <property type="match status" value="1"/>
</dbReference>
<dbReference type="PANTHER" id="PTHR43245:SF13">
    <property type="entry name" value="UDP-D-APIOSE_UDP-D-XYLOSE SYNTHASE 2"/>
    <property type="match status" value="1"/>
</dbReference>
<dbReference type="Pfam" id="PF01370">
    <property type="entry name" value="Epimerase"/>
    <property type="match status" value="1"/>
</dbReference>
<dbReference type="SUPFAM" id="SSF51735">
    <property type="entry name" value="NAD(P)-binding Rossmann-fold domains"/>
    <property type="match status" value="1"/>
</dbReference>
<name>RFBJ_YERPU</name>
<sequence>MRIVLTGGSGYIGSSLTPVLIKKYGRVYNIGRNTISEVSINGSKEYCEFTYESLFDSLVELSPDLVINLAAGYYNDSGAPDLNVIDGNLKIPFIILEYFKSCNYGRFINIGSYWEFSCSGRGVKGVNPYGIIKSTVRRLLDYYSKYNVIYTNLILYGSYGDNDHRGKIVDCIIDAVNSNETLKLSPGEQKLNLVYIDDIIEAILYIVSSDNGQYDNETLSIYTPTEHTVKEIVCFINEIKDNNLSLGGGRYRNDEVMAPDYKYRNIFHAKDKLKEYITSKIKK</sequence>
<organism>
    <name type="scientific">Yersinia pseudotuberculosis</name>
    <dbReference type="NCBI Taxonomy" id="633"/>
    <lineage>
        <taxon>Bacteria</taxon>
        <taxon>Pseudomonadati</taxon>
        <taxon>Pseudomonadota</taxon>
        <taxon>Gammaproteobacteria</taxon>
        <taxon>Enterobacterales</taxon>
        <taxon>Yersiniaceae</taxon>
        <taxon>Yersinia</taxon>
    </lineage>
</organism>
<feature type="chain" id="PRO_0000424185" description="CDP-abequose synthase">
    <location>
        <begin position="1"/>
        <end position="283"/>
    </location>
</feature>
<feature type="active site" description="Proton acceptor" evidence="1">
    <location>
        <position position="129"/>
    </location>
</feature>
<feature type="binding site" evidence="1">
    <location>
        <begin position="7"/>
        <end position="13"/>
    </location>
    <ligand>
        <name>NAD(+)</name>
        <dbReference type="ChEBI" id="CHEBI:57540"/>
    </ligand>
</feature>
<feature type="binding site" evidence="1">
    <location>
        <begin position="48"/>
        <end position="49"/>
    </location>
    <ligand>
        <name>NAD(+)</name>
        <dbReference type="ChEBI" id="CHEBI:57540"/>
    </ligand>
</feature>
<feature type="binding site" evidence="1">
    <location>
        <position position="129"/>
    </location>
    <ligand>
        <name>NAD(+)</name>
        <dbReference type="ChEBI" id="CHEBI:57540"/>
    </ligand>
</feature>
<feature type="binding site" evidence="1">
    <location>
        <position position="133"/>
    </location>
    <ligand>
        <name>NAD(+)</name>
        <dbReference type="ChEBI" id="CHEBI:57540"/>
    </ligand>
</feature>
<protein>
    <recommendedName>
        <fullName>CDP-abequose synthase</fullName>
        <ecNumber>1.1.1.341</ecNumber>
    </recommendedName>
</protein>
<evidence type="ECO:0000250" key="1"/>
<evidence type="ECO:0000269" key="2">
    <source>
    </source>
</evidence>
<evidence type="ECO:0000269" key="3">
    <source>
    </source>
</evidence>
<evidence type="ECO:0000305" key="4"/>
<gene>
    <name type="primary">rfbJ</name>
    <name type="synonym">abe</name>
</gene>
<keyword id="KW-0448">Lipopolysaccharide biosynthesis</keyword>
<keyword id="KW-0521">NADP</keyword>
<keyword id="KW-0560">Oxidoreductase</keyword>
<proteinExistence type="evidence at protein level"/>
<reference key="1">
    <citation type="journal article" date="1993" name="J. Bacteriol.">
        <title>Molecular analysis of the 3,6-dideoxyhexose pathway genes of Yersinia pseudotuberculosis serogroup IIA.</title>
        <authorList>
            <person name="Kessler A.C."/>
            <person name="Haase A."/>
            <person name="Reeves P.R."/>
        </authorList>
    </citation>
    <scope>NUCLEOTIDE SEQUENCE [GENOMIC DNA]</scope>
    <scope>CATALYTIC ACTIVITY</scope>
</reference>
<reference key="2">
    <citation type="journal article" date="1995" name="Biochim. Biophys. Acta">
        <title>Genetic organisation and evolution of Yersinia pseudotuberculosis 3,6-dideoxyhexose biosynthetic genes.</title>
        <authorList>
            <person name="Hobbs M."/>
            <person name="Reeves P.R."/>
        </authorList>
    </citation>
    <scope>NUCLEOTIDE SEQUENCE [GENOMIC DNA]</scope>
</reference>
<reference key="3">
    <citation type="journal article" date="2002" name="Infect. Immun.">
        <title>Relationship of Yersinia pseudotuberculosis O antigens IA, IIA, and IVB: the IIA gene cluster was derived from that of IVB.</title>
        <authorList>
            <person name="Pacinelli E."/>
            <person name="Wang L."/>
            <person name="Reeves P.R."/>
        </authorList>
    </citation>
    <scope>NUCLEOTIDE SEQUENCE [GENOMIC DNA]</scope>
</reference>
<reference key="4">
    <citation type="journal article" date="1991" name="J. Gen. Microbiol.">
        <title>Molecular cloning and genetic characterization of the rfb region from Yersinia pseudotuberculosis serogroup IIA, which determines the formation of the 3,6-dideoxyhexose abequose.</title>
        <authorList>
            <person name="Kessler A.C."/>
            <person name="Brown P.K."/>
            <person name="Romana L.K."/>
            <person name="Reeves P.R."/>
        </authorList>
    </citation>
    <scope>IDENTIFICATION</scope>
    <scope>FUNCTION</scope>
</reference>
<accession>Q05342</accession>